<gene>
    <name evidence="1" type="primary">rpsF</name>
    <name type="ordered locus">Dhaf_4936</name>
</gene>
<feature type="chain" id="PRO_1000133525" description="Small ribosomal subunit protein bS6">
    <location>
        <begin position="1"/>
        <end position="95"/>
    </location>
</feature>
<sequence length="95" mass="10850">MKAYEVLYVIRPDLDDEAVAATVDKLSEVVTNNGGADVAIDKWGKRRLAYEVNDYREGFYILMNFNGEARTAQEVERIMKISDAVVRFLTTKKED</sequence>
<name>RS6_DESHD</name>
<reference key="1">
    <citation type="journal article" date="2012" name="BMC Microbiol.">
        <title>Genome sequence of Desulfitobacterium hafniense DCB-2, a Gram-positive anaerobe capable of dehalogenation and metal reduction.</title>
        <authorList>
            <person name="Kim S.H."/>
            <person name="Harzman C."/>
            <person name="Davis J.K."/>
            <person name="Hutcheson R."/>
            <person name="Broderick J.B."/>
            <person name="Marsh T.L."/>
            <person name="Tiedje J.M."/>
        </authorList>
    </citation>
    <scope>NUCLEOTIDE SEQUENCE [LARGE SCALE GENOMIC DNA]</scope>
    <source>
        <strain>DSM 10664 / DCB-2</strain>
    </source>
</reference>
<keyword id="KW-0687">Ribonucleoprotein</keyword>
<keyword id="KW-0689">Ribosomal protein</keyword>
<keyword id="KW-0694">RNA-binding</keyword>
<keyword id="KW-0699">rRNA-binding</keyword>
<evidence type="ECO:0000255" key="1">
    <source>
        <dbReference type="HAMAP-Rule" id="MF_00360"/>
    </source>
</evidence>
<evidence type="ECO:0000305" key="2"/>
<comment type="function">
    <text evidence="1">Binds together with bS18 to 16S ribosomal RNA.</text>
</comment>
<comment type="similarity">
    <text evidence="1">Belongs to the bacterial ribosomal protein bS6 family.</text>
</comment>
<protein>
    <recommendedName>
        <fullName evidence="1">Small ribosomal subunit protein bS6</fullName>
    </recommendedName>
    <alternativeName>
        <fullName evidence="2">30S ribosomal protein S6</fullName>
    </alternativeName>
</protein>
<proteinExistence type="inferred from homology"/>
<dbReference type="EMBL" id="CP001336">
    <property type="protein sequence ID" value="ACL22930.1"/>
    <property type="molecule type" value="Genomic_DNA"/>
</dbReference>
<dbReference type="RefSeq" id="WP_011462318.1">
    <property type="nucleotide sequence ID" value="NC_011830.1"/>
</dbReference>
<dbReference type="SMR" id="B8G0J4"/>
<dbReference type="KEGG" id="dhd:Dhaf_4936"/>
<dbReference type="HOGENOM" id="CLU_113441_5_3_9"/>
<dbReference type="Proteomes" id="UP000007726">
    <property type="component" value="Chromosome"/>
</dbReference>
<dbReference type="GO" id="GO:0005737">
    <property type="term" value="C:cytoplasm"/>
    <property type="evidence" value="ECO:0007669"/>
    <property type="project" value="UniProtKB-ARBA"/>
</dbReference>
<dbReference type="GO" id="GO:1990904">
    <property type="term" value="C:ribonucleoprotein complex"/>
    <property type="evidence" value="ECO:0007669"/>
    <property type="project" value="UniProtKB-KW"/>
</dbReference>
<dbReference type="GO" id="GO:0005840">
    <property type="term" value="C:ribosome"/>
    <property type="evidence" value="ECO:0007669"/>
    <property type="project" value="UniProtKB-KW"/>
</dbReference>
<dbReference type="GO" id="GO:0070181">
    <property type="term" value="F:small ribosomal subunit rRNA binding"/>
    <property type="evidence" value="ECO:0007669"/>
    <property type="project" value="TreeGrafter"/>
</dbReference>
<dbReference type="GO" id="GO:0003735">
    <property type="term" value="F:structural constituent of ribosome"/>
    <property type="evidence" value="ECO:0007669"/>
    <property type="project" value="InterPro"/>
</dbReference>
<dbReference type="GO" id="GO:0006412">
    <property type="term" value="P:translation"/>
    <property type="evidence" value="ECO:0007669"/>
    <property type="project" value="UniProtKB-UniRule"/>
</dbReference>
<dbReference type="CDD" id="cd00473">
    <property type="entry name" value="bS6"/>
    <property type="match status" value="1"/>
</dbReference>
<dbReference type="Gene3D" id="3.30.70.60">
    <property type="match status" value="1"/>
</dbReference>
<dbReference type="HAMAP" id="MF_00360">
    <property type="entry name" value="Ribosomal_bS6"/>
    <property type="match status" value="1"/>
</dbReference>
<dbReference type="InterPro" id="IPR000529">
    <property type="entry name" value="Ribosomal_bS6"/>
</dbReference>
<dbReference type="InterPro" id="IPR035980">
    <property type="entry name" value="Ribosomal_bS6_sf"/>
</dbReference>
<dbReference type="InterPro" id="IPR020814">
    <property type="entry name" value="Ribosomal_S6_plastid/chlpt"/>
</dbReference>
<dbReference type="InterPro" id="IPR014717">
    <property type="entry name" value="Transl_elong_EF1B/ribsomal_bS6"/>
</dbReference>
<dbReference type="NCBIfam" id="TIGR00166">
    <property type="entry name" value="S6"/>
    <property type="match status" value="1"/>
</dbReference>
<dbReference type="PANTHER" id="PTHR21011">
    <property type="entry name" value="MITOCHONDRIAL 28S RIBOSOMAL PROTEIN S6"/>
    <property type="match status" value="1"/>
</dbReference>
<dbReference type="PANTHER" id="PTHR21011:SF1">
    <property type="entry name" value="SMALL RIBOSOMAL SUBUNIT PROTEIN BS6M"/>
    <property type="match status" value="1"/>
</dbReference>
<dbReference type="Pfam" id="PF01250">
    <property type="entry name" value="Ribosomal_S6"/>
    <property type="match status" value="1"/>
</dbReference>
<dbReference type="SUPFAM" id="SSF54995">
    <property type="entry name" value="Ribosomal protein S6"/>
    <property type="match status" value="1"/>
</dbReference>
<organism>
    <name type="scientific">Desulfitobacterium hafniense (strain DSM 10664 / DCB-2)</name>
    <dbReference type="NCBI Taxonomy" id="272564"/>
    <lineage>
        <taxon>Bacteria</taxon>
        <taxon>Bacillati</taxon>
        <taxon>Bacillota</taxon>
        <taxon>Clostridia</taxon>
        <taxon>Eubacteriales</taxon>
        <taxon>Desulfitobacteriaceae</taxon>
        <taxon>Desulfitobacterium</taxon>
    </lineage>
</organism>
<accession>B8G0J4</accession>